<proteinExistence type="inferred from homology"/>
<gene>
    <name evidence="1" type="primary">rnhB</name>
    <name type="ordered locus">NMC0183</name>
</gene>
<organism>
    <name type="scientific">Neisseria meningitidis serogroup C / serotype 2a (strain ATCC 700532 / DSM 15464 / FAM18)</name>
    <dbReference type="NCBI Taxonomy" id="272831"/>
    <lineage>
        <taxon>Bacteria</taxon>
        <taxon>Pseudomonadati</taxon>
        <taxon>Pseudomonadota</taxon>
        <taxon>Betaproteobacteria</taxon>
        <taxon>Neisseriales</taxon>
        <taxon>Neisseriaceae</taxon>
        <taxon>Neisseria</taxon>
    </lineage>
</organism>
<accession>A1KRM4</accession>
<feature type="chain" id="PRO_1000031171" description="Ribonuclease HII">
    <location>
        <begin position="1"/>
        <end position="194"/>
    </location>
</feature>
<feature type="domain" description="RNase H type-2" evidence="2">
    <location>
        <begin position="3"/>
        <end position="193"/>
    </location>
</feature>
<feature type="binding site" evidence="1">
    <location>
        <position position="9"/>
    </location>
    <ligand>
        <name>a divalent metal cation</name>
        <dbReference type="ChEBI" id="CHEBI:60240"/>
    </ligand>
</feature>
<feature type="binding site" evidence="1">
    <location>
        <position position="10"/>
    </location>
    <ligand>
        <name>a divalent metal cation</name>
        <dbReference type="ChEBI" id="CHEBI:60240"/>
    </ligand>
</feature>
<feature type="binding site" evidence="1">
    <location>
        <position position="101"/>
    </location>
    <ligand>
        <name>a divalent metal cation</name>
        <dbReference type="ChEBI" id="CHEBI:60240"/>
    </ligand>
</feature>
<name>RNH2_NEIMF</name>
<comment type="function">
    <text evidence="1">Endonuclease that specifically degrades the RNA of RNA-DNA hybrids.</text>
</comment>
<comment type="catalytic activity">
    <reaction evidence="1">
        <text>Endonucleolytic cleavage to 5'-phosphomonoester.</text>
        <dbReference type="EC" id="3.1.26.4"/>
    </reaction>
</comment>
<comment type="cofactor">
    <cofactor evidence="1">
        <name>Mn(2+)</name>
        <dbReference type="ChEBI" id="CHEBI:29035"/>
    </cofactor>
    <cofactor evidence="1">
        <name>Mg(2+)</name>
        <dbReference type="ChEBI" id="CHEBI:18420"/>
    </cofactor>
    <text evidence="1">Manganese or magnesium. Binds 1 divalent metal ion per monomer in the absence of substrate. May bind a second metal ion after substrate binding.</text>
</comment>
<comment type="subcellular location">
    <subcellularLocation>
        <location evidence="1">Cytoplasm</location>
    </subcellularLocation>
</comment>
<comment type="similarity">
    <text evidence="1">Belongs to the RNase HII family.</text>
</comment>
<evidence type="ECO:0000255" key="1">
    <source>
        <dbReference type="HAMAP-Rule" id="MF_00052"/>
    </source>
</evidence>
<evidence type="ECO:0000255" key="2">
    <source>
        <dbReference type="PROSITE-ProRule" id="PRU01319"/>
    </source>
</evidence>
<reference key="1">
    <citation type="journal article" date="2007" name="PLoS Genet.">
        <title>Meningococcal genetic variation mechanisms viewed through comparative analysis of serogroup C strain FAM18.</title>
        <authorList>
            <person name="Bentley S.D."/>
            <person name="Vernikos G.S."/>
            <person name="Snyder L.A.S."/>
            <person name="Churcher C."/>
            <person name="Arrowsmith C."/>
            <person name="Chillingworth T."/>
            <person name="Cronin A."/>
            <person name="Davis P.H."/>
            <person name="Holroyd N.E."/>
            <person name="Jagels K."/>
            <person name="Maddison M."/>
            <person name="Moule S."/>
            <person name="Rabbinowitsch E."/>
            <person name="Sharp S."/>
            <person name="Unwin L."/>
            <person name="Whitehead S."/>
            <person name="Quail M.A."/>
            <person name="Achtman M."/>
            <person name="Barrell B.G."/>
            <person name="Saunders N.J."/>
            <person name="Parkhill J."/>
        </authorList>
    </citation>
    <scope>NUCLEOTIDE SEQUENCE [LARGE SCALE GENOMIC DNA]</scope>
    <source>
        <strain>ATCC 700532 / DSM 15464 / FAM18</strain>
    </source>
</reference>
<keyword id="KW-0963">Cytoplasm</keyword>
<keyword id="KW-0255">Endonuclease</keyword>
<keyword id="KW-0378">Hydrolase</keyword>
<keyword id="KW-0464">Manganese</keyword>
<keyword id="KW-0479">Metal-binding</keyword>
<keyword id="KW-0540">Nuclease</keyword>
<dbReference type="EC" id="3.1.26.4" evidence="1"/>
<dbReference type="EMBL" id="AM421808">
    <property type="protein sequence ID" value="CAM09502.1"/>
    <property type="molecule type" value="Genomic_DNA"/>
</dbReference>
<dbReference type="RefSeq" id="WP_002238622.1">
    <property type="nucleotide sequence ID" value="NC_008767.1"/>
</dbReference>
<dbReference type="SMR" id="A1KRM4"/>
<dbReference type="KEGG" id="nmc:NMC0183"/>
<dbReference type="HOGENOM" id="CLU_036532_3_2_4"/>
<dbReference type="Proteomes" id="UP000002286">
    <property type="component" value="Chromosome"/>
</dbReference>
<dbReference type="GO" id="GO:0005737">
    <property type="term" value="C:cytoplasm"/>
    <property type="evidence" value="ECO:0007669"/>
    <property type="project" value="UniProtKB-SubCell"/>
</dbReference>
<dbReference type="GO" id="GO:0032299">
    <property type="term" value="C:ribonuclease H2 complex"/>
    <property type="evidence" value="ECO:0007669"/>
    <property type="project" value="TreeGrafter"/>
</dbReference>
<dbReference type="GO" id="GO:0030145">
    <property type="term" value="F:manganese ion binding"/>
    <property type="evidence" value="ECO:0007669"/>
    <property type="project" value="UniProtKB-UniRule"/>
</dbReference>
<dbReference type="GO" id="GO:0003723">
    <property type="term" value="F:RNA binding"/>
    <property type="evidence" value="ECO:0007669"/>
    <property type="project" value="InterPro"/>
</dbReference>
<dbReference type="GO" id="GO:0004523">
    <property type="term" value="F:RNA-DNA hybrid ribonuclease activity"/>
    <property type="evidence" value="ECO:0007669"/>
    <property type="project" value="UniProtKB-UniRule"/>
</dbReference>
<dbReference type="GO" id="GO:0043137">
    <property type="term" value="P:DNA replication, removal of RNA primer"/>
    <property type="evidence" value="ECO:0007669"/>
    <property type="project" value="TreeGrafter"/>
</dbReference>
<dbReference type="GO" id="GO:0006298">
    <property type="term" value="P:mismatch repair"/>
    <property type="evidence" value="ECO:0007669"/>
    <property type="project" value="TreeGrafter"/>
</dbReference>
<dbReference type="CDD" id="cd07182">
    <property type="entry name" value="RNase_HII_bacteria_HII_like"/>
    <property type="match status" value="1"/>
</dbReference>
<dbReference type="FunFam" id="3.30.420.10:FF:000006">
    <property type="entry name" value="Ribonuclease HII"/>
    <property type="match status" value="1"/>
</dbReference>
<dbReference type="Gene3D" id="3.30.420.10">
    <property type="entry name" value="Ribonuclease H-like superfamily/Ribonuclease H"/>
    <property type="match status" value="1"/>
</dbReference>
<dbReference type="HAMAP" id="MF_00052_B">
    <property type="entry name" value="RNase_HII_B"/>
    <property type="match status" value="1"/>
</dbReference>
<dbReference type="InterPro" id="IPR022898">
    <property type="entry name" value="RNase_HII"/>
</dbReference>
<dbReference type="InterPro" id="IPR001352">
    <property type="entry name" value="RNase_HII/HIII"/>
</dbReference>
<dbReference type="InterPro" id="IPR024567">
    <property type="entry name" value="RNase_HII/HIII_dom"/>
</dbReference>
<dbReference type="InterPro" id="IPR012337">
    <property type="entry name" value="RNaseH-like_sf"/>
</dbReference>
<dbReference type="InterPro" id="IPR036397">
    <property type="entry name" value="RNaseH_sf"/>
</dbReference>
<dbReference type="NCBIfam" id="NF000595">
    <property type="entry name" value="PRK00015.1-3"/>
    <property type="match status" value="1"/>
</dbReference>
<dbReference type="NCBIfam" id="NF000596">
    <property type="entry name" value="PRK00015.1-4"/>
    <property type="match status" value="1"/>
</dbReference>
<dbReference type="PANTHER" id="PTHR10954">
    <property type="entry name" value="RIBONUCLEASE H2 SUBUNIT A"/>
    <property type="match status" value="1"/>
</dbReference>
<dbReference type="PANTHER" id="PTHR10954:SF18">
    <property type="entry name" value="RIBONUCLEASE HII"/>
    <property type="match status" value="1"/>
</dbReference>
<dbReference type="Pfam" id="PF01351">
    <property type="entry name" value="RNase_HII"/>
    <property type="match status" value="1"/>
</dbReference>
<dbReference type="SUPFAM" id="SSF53098">
    <property type="entry name" value="Ribonuclease H-like"/>
    <property type="match status" value="1"/>
</dbReference>
<dbReference type="PROSITE" id="PS51975">
    <property type="entry name" value="RNASE_H_2"/>
    <property type="match status" value="1"/>
</dbReference>
<sequence length="194" mass="21164">MHILTAGVDEAGRGPLVGSVFAAAVILPEIFDLPGLTDSKKLSEKKRDALAEMIKNQAVAWHVAAAGPEEIASLNILHATMLAMKRAVDGLAVRPEKIFIDGNRIPEHLNIPAEAVVKGDSKIIEISAASVLAKTARDAEMYALAQRHPQYGFDKHKGYGTKQHLEALEKYGVLPEHRRDFAPVRNLFAQQALF</sequence>
<protein>
    <recommendedName>
        <fullName evidence="1">Ribonuclease HII</fullName>
        <shortName evidence="1">RNase HII</shortName>
        <ecNumber evidence="1">3.1.26.4</ecNumber>
    </recommendedName>
</protein>